<comment type="function">
    <text evidence="1">Catalyzes the anti-1,4-elimination of the C-3 phosphate and the C-6 proR hydrogen from 5-enolpyruvylshikimate-3-phosphate (EPSP) to yield chorismate, which is the branch point compound that serves as the starting substrate for the three terminal pathways of aromatic amino acid biosynthesis. This reaction introduces a second double bond into the aromatic ring system.</text>
</comment>
<comment type="catalytic activity">
    <reaction evidence="1">
        <text>5-O-(1-carboxyvinyl)-3-phosphoshikimate = chorismate + phosphate</text>
        <dbReference type="Rhea" id="RHEA:21020"/>
        <dbReference type="ChEBI" id="CHEBI:29748"/>
        <dbReference type="ChEBI" id="CHEBI:43474"/>
        <dbReference type="ChEBI" id="CHEBI:57701"/>
        <dbReference type="EC" id="4.2.3.5"/>
    </reaction>
</comment>
<comment type="cofactor">
    <cofactor evidence="1">
        <name>FMNH2</name>
        <dbReference type="ChEBI" id="CHEBI:57618"/>
    </cofactor>
    <text evidence="1">Reduced FMN (FMNH(2)).</text>
</comment>
<comment type="pathway">
    <text evidence="1">Metabolic intermediate biosynthesis; chorismate biosynthesis; chorismate from D-erythrose 4-phosphate and phosphoenolpyruvate: step 7/7.</text>
</comment>
<comment type="subunit">
    <text evidence="1">Homotetramer.</text>
</comment>
<comment type="similarity">
    <text evidence="1">Belongs to the chorismate synthase family.</text>
</comment>
<gene>
    <name evidence="1" type="primary">aroC</name>
    <name type="ordered locus">YpAngola_A0377</name>
</gene>
<accession>A9R7W3</accession>
<proteinExistence type="inferred from homology"/>
<reference key="1">
    <citation type="journal article" date="2010" name="J. Bacteriol.">
        <title>Genome sequence of the deep-rooted Yersinia pestis strain Angola reveals new insights into the evolution and pangenome of the plague bacterium.</title>
        <authorList>
            <person name="Eppinger M."/>
            <person name="Worsham P.L."/>
            <person name="Nikolich M.P."/>
            <person name="Riley D.R."/>
            <person name="Sebastian Y."/>
            <person name="Mou S."/>
            <person name="Achtman M."/>
            <person name="Lindler L.E."/>
            <person name="Ravel J."/>
        </authorList>
    </citation>
    <scope>NUCLEOTIDE SEQUENCE [LARGE SCALE GENOMIC DNA]</scope>
    <source>
        <strain>Angola</strain>
    </source>
</reference>
<name>AROC_YERPG</name>
<keyword id="KW-0028">Amino-acid biosynthesis</keyword>
<keyword id="KW-0057">Aromatic amino acid biosynthesis</keyword>
<keyword id="KW-0274">FAD</keyword>
<keyword id="KW-0285">Flavoprotein</keyword>
<keyword id="KW-0288">FMN</keyword>
<keyword id="KW-0456">Lyase</keyword>
<keyword id="KW-0521">NADP</keyword>
<dbReference type="EC" id="4.2.3.5" evidence="1"/>
<dbReference type="EMBL" id="CP000901">
    <property type="protein sequence ID" value="ABX88190.1"/>
    <property type="molecule type" value="Genomic_DNA"/>
</dbReference>
<dbReference type="RefSeq" id="WP_002209711.1">
    <property type="nucleotide sequence ID" value="NZ_CP009935.1"/>
</dbReference>
<dbReference type="SMR" id="A9R7W3"/>
<dbReference type="GeneID" id="57975938"/>
<dbReference type="KEGG" id="ypg:YpAngola_A0377"/>
<dbReference type="PATRIC" id="fig|349746.12.peg.1326"/>
<dbReference type="UniPathway" id="UPA00053">
    <property type="reaction ID" value="UER00090"/>
</dbReference>
<dbReference type="GO" id="GO:0005829">
    <property type="term" value="C:cytosol"/>
    <property type="evidence" value="ECO:0007669"/>
    <property type="project" value="TreeGrafter"/>
</dbReference>
<dbReference type="GO" id="GO:0004107">
    <property type="term" value="F:chorismate synthase activity"/>
    <property type="evidence" value="ECO:0007669"/>
    <property type="project" value="UniProtKB-UniRule"/>
</dbReference>
<dbReference type="GO" id="GO:0010181">
    <property type="term" value="F:FMN binding"/>
    <property type="evidence" value="ECO:0007669"/>
    <property type="project" value="TreeGrafter"/>
</dbReference>
<dbReference type="GO" id="GO:0008652">
    <property type="term" value="P:amino acid biosynthetic process"/>
    <property type="evidence" value="ECO:0007669"/>
    <property type="project" value="UniProtKB-KW"/>
</dbReference>
<dbReference type="GO" id="GO:0009073">
    <property type="term" value="P:aromatic amino acid family biosynthetic process"/>
    <property type="evidence" value="ECO:0007669"/>
    <property type="project" value="UniProtKB-KW"/>
</dbReference>
<dbReference type="GO" id="GO:0009423">
    <property type="term" value="P:chorismate biosynthetic process"/>
    <property type="evidence" value="ECO:0007669"/>
    <property type="project" value="UniProtKB-UniRule"/>
</dbReference>
<dbReference type="CDD" id="cd07304">
    <property type="entry name" value="Chorismate_synthase"/>
    <property type="match status" value="1"/>
</dbReference>
<dbReference type="FunFam" id="3.60.150.10:FF:000001">
    <property type="entry name" value="Chorismate synthase"/>
    <property type="match status" value="1"/>
</dbReference>
<dbReference type="Gene3D" id="3.60.150.10">
    <property type="entry name" value="Chorismate synthase AroC"/>
    <property type="match status" value="1"/>
</dbReference>
<dbReference type="HAMAP" id="MF_00300">
    <property type="entry name" value="Chorismate_synth"/>
    <property type="match status" value="1"/>
</dbReference>
<dbReference type="InterPro" id="IPR000453">
    <property type="entry name" value="Chorismate_synth"/>
</dbReference>
<dbReference type="InterPro" id="IPR035904">
    <property type="entry name" value="Chorismate_synth_AroC_sf"/>
</dbReference>
<dbReference type="InterPro" id="IPR020541">
    <property type="entry name" value="Chorismate_synthase_CS"/>
</dbReference>
<dbReference type="NCBIfam" id="TIGR00033">
    <property type="entry name" value="aroC"/>
    <property type="match status" value="1"/>
</dbReference>
<dbReference type="NCBIfam" id="NF003793">
    <property type="entry name" value="PRK05382.1"/>
    <property type="match status" value="1"/>
</dbReference>
<dbReference type="PANTHER" id="PTHR21085">
    <property type="entry name" value="CHORISMATE SYNTHASE"/>
    <property type="match status" value="1"/>
</dbReference>
<dbReference type="PANTHER" id="PTHR21085:SF0">
    <property type="entry name" value="CHORISMATE SYNTHASE"/>
    <property type="match status" value="1"/>
</dbReference>
<dbReference type="Pfam" id="PF01264">
    <property type="entry name" value="Chorismate_synt"/>
    <property type="match status" value="1"/>
</dbReference>
<dbReference type="PIRSF" id="PIRSF001456">
    <property type="entry name" value="Chorismate_synth"/>
    <property type="match status" value="1"/>
</dbReference>
<dbReference type="SUPFAM" id="SSF103263">
    <property type="entry name" value="Chorismate synthase, AroC"/>
    <property type="match status" value="1"/>
</dbReference>
<dbReference type="PROSITE" id="PS00787">
    <property type="entry name" value="CHORISMATE_SYNTHASE_1"/>
    <property type="match status" value="1"/>
</dbReference>
<dbReference type="PROSITE" id="PS00788">
    <property type="entry name" value="CHORISMATE_SYNTHASE_2"/>
    <property type="match status" value="1"/>
</dbReference>
<dbReference type="PROSITE" id="PS00789">
    <property type="entry name" value="CHORISMATE_SYNTHASE_3"/>
    <property type="match status" value="1"/>
</dbReference>
<feature type="chain" id="PRO_1000115421" description="Chorismate synthase">
    <location>
        <begin position="1"/>
        <end position="361"/>
    </location>
</feature>
<feature type="binding site" evidence="1">
    <location>
        <position position="48"/>
    </location>
    <ligand>
        <name>NADP(+)</name>
        <dbReference type="ChEBI" id="CHEBI:58349"/>
    </ligand>
</feature>
<feature type="binding site" evidence="1">
    <location>
        <position position="54"/>
    </location>
    <ligand>
        <name>NADP(+)</name>
        <dbReference type="ChEBI" id="CHEBI:58349"/>
    </ligand>
</feature>
<feature type="binding site" evidence="1">
    <location>
        <begin position="125"/>
        <end position="127"/>
    </location>
    <ligand>
        <name>FMN</name>
        <dbReference type="ChEBI" id="CHEBI:58210"/>
    </ligand>
</feature>
<feature type="binding site" evidence="1">
    <location>
        <begin position="238"/>
        <end position="239"/>
    </location>
    <ligand>
        <name>FMN</name>
        <dbReference type="ChEBI" id="CHEBI:58210"/>
    </ligand>
</feature>
<feature type="binding site" evidence="1">
    <location>
        <position position="278"/>
    </location>
    <ligand>
        <name>FMN</name>
        <dbReference type="ChEBI" id="CHEBI:58210"/>
    </ligand>
</feature>
<feature type="binding site" evidence="1">
    <location>
        <begin position="293"/>
        <end position="297"/>
    </location>
    <ligand>
        <name>FMN</name>
        <dbReference type="ChEBI" id="CHEBI:58210"/>
    </ligand>
</feature>
<feature type="binding site" evidence="1">
    <location>
        <position position="319"/>
    </location>
    <ligand>
        <name>FMN</name>
        <dbReference type="ChEBI" id="CHEBI:58210"/>
    </ligand>
</feature>
<protein>
    <recommendedName>
        <fullName evidence="1">Chorismate synthase</fullName>
        <shortName evidence="1">CS</shortName>
        <ecNumber evidence="1">4.2.3.5</ecNumber>
    </recommendedName>
    <alternativeName>
        <fullName evidence="1">5-enolpyruvylshikimate-3-phosphate phospholyase</fullName>
    </alternativeName>
</protein>
<sequence length="361" mass="38982">MAGNSIGQFFRVTTFGESHGIALGCIIDGVPPGIPITEADIQLDLDRRRPGTSRYTTQRRELDQVRILSGVFEGVTTGTSIGLMIENTDQRSQDYSAIKDVFRPGHADYTYEQKYGVRDYRGGGRSSARETAMRVAAGAIAKKYLAQKFGVQVRGYLAQMGDVSCDLLDWDLVEQNPFFCPDASKLEPLDALMRELKKAGDSIGAKITVVAENVPVGLGEPVFDRLDADLAHALMSINAVKGVEIGDGFAVVTKRGSENRDEITPQGFQSNHAGGILGGISSGQPVVAHIALKPTSSIMVPGQTINRQGEAVEMVTRGRHDPCVGIRAVPIAEAMMAIVLMDHLLRQRAQCGDVASDVPRW</sequence>
<evidence type="ECO:0000255" key="1">
    <source>
        <dbReference type="HAMAP-Rule" id="MF_00300"/>
    </source>
</evidence>
<organism>
    <name type="scientific">Yersinia pestis bv. Antiqua (strain Angola)</name>
    <dbReference type="NCBI Taxonomy" id="349746"/>
    <lineage>
        <taxon>Bacteria</taxon>
        <taxon>Pseudomonadati</taxon>
        <taxon>Pseudomonadota</taxon>
        <taxon>Gammaproteobacteria</taxon>
        <taxon>Enterobacterales</taxon>
        <taxon>Yersiniaceae</taxon>
        <taxon>Yersinia</taxon>
    </lineage>
</organism>